<protein>
    <recommendedName>
        <fullName evidence="1">tRNA (guanine-N(1)-)-methyltransferase</fullName>
        <ecNumber evidence="1">2.1.1.228</ecNumber>
    </recommendedName>
    <alternativeName>
        <fullName evidence="1">M1G-methyltransferase</fullName>
    </alternativeName>
    <alternativeName>
        <fullName evidence="1">tRNA [GM37] methyltransferase</fullName>
    </alternativeName>
</protein>
<gene>
    <name evidence="1" type="primary">trmD</name>
    <name type="ordered locus">SbBS512_E2996</name>
</gene>
<proteinExistence type="inferred from homology"/>
<name>TRMD_SHIB3</name>
<dbReference type="EC" id="2.1.1.228" evidence="1"/>
<dbReference type="EMBL" id="CP001063">
    <property type="protein sequence ID" value="ACD06772.1"/>
    <property type="molecule type" value="Genomic_DNA"/>
</dbReference>
<dbReference type="RefSeq" id="WP_000264777.1">
    <property type="nucleotide sequence ID" value="NC_010658.1"/>
</dbReference>
<dbReference type="SMR" id="B2TYM9"/>
<dbReference type="STRING" id="344609.SbBS512_E2996"/>
<dbReference type="GeneID" id="93774457"/>
<dbReference type="KEGG" id="sbc:SbBS512_E2996"/>
<dbReference type="HOGENOM" id="CLU_047363_0_1_6"/>
<dbReference type="Proteomes" id="UP000001030">
    <property type="component" value="Chromosome"/>
</dbReference>
<dbReference type="GO" id="GO:0005829">
    <property type="term" value="C:cytosol"/>
    <property type="evidence" value="ECO:0007669"/>
    <property type="project" value="TreeGrafter"/>
</dbReference>
<dbReference type="GO" id="GO:0052906">
    <property type="term" value="F:tRNA (guanine(37)-N1)-methyltransferase activity"/>
    <property type="evidence" value="ECO:0007669"/>
    <property type="project" value="UniProtKB-UniRule"/>
</dbReference>
<dbReference type="GO" id="GO:0002939">
    <property type="term" value="P:tRNA N1-guanine methylation"/>
    <property type="evidence" value="ECO:0007669"/>
    <property type="project" value="TreeGrafter"/>
</dbReference>
<dbReference type="CDD" id="cd18080">
    <property type="entry name" value="TrmD-like"/>
    <property type="match status" value="1"/>
</dbReference>
<dbReference type="FunFam" id="1.10.1270.20:FF:000001">
    <property type="entry name" value="tRNA (guanine-N(1)-)-methyltransferase"/>
    <property type="match status" value="1"/>
</dbReference>
<dbReference type="FunFam" id="3.40.1280.10:FF:000001">
    <property type="entry name" value="tRNA (guanine-N(1)-)-methyltransferase"/>
    <property type="match status" value="1"/>
</dbReference>
<dbReference type="Gene3D" id="3.40.1280.10">
    <property type="match status" value="1"/>
</dbReference>
<dbReference type="Gene3D" id="1.10.1270.20">
    <property type="entry name" value="tRNA(m1g37)methyltransferase, domain 2"/>
    <property type="match status" value="1"/>
</dbReference>
<dbReference type="HAMAP" id="MF_00605">
    <property type="entry name" value="TrmD"/>
    <property type="match status" value="1"/>
</dbReference>
<dbReference type="InterPro" id="IPR029028">
    <property type="entry name" value="Alpha/beta_knot_MTases"/>
</dbReference>
<dbReference type="InterPro" id="IPR023148">
    <property type="entry name" value="tRNA_m1G_MeTrfase_C_sf"/>
</dbReference>
<dbReference type="InterPro" id="IPR002649">
    <property type="entry name" value="tRNA_m1G_MeTrfase_TrmD"/>
</dbReference>
<dbReference type="InterPro" id="IPR029026">
    <property type="entry name" value="tRNA_m1G_MTases_N"/>
</dbReference>
<dbReference type="InterPro" id="IPR016009">
    <property type="entry name" value="tRNA_MeTrfase_TRMD/TRM10"/>
</dbReference>
<dbReference type="NCBIfam" id="NF000648">
    <property type="entry name" value="PRK00026.1"/>
    <property type="match status" value="1"/>
</dbReference>
<dbReference type="NCBIfam" id="TIGR00088">
    <property type="entry name" value="trmD"/>
    <property type="match status" value="1"/>
</dbReference>
<dbReference type="PANTHER" id="PTHR46417">
    <property type="entry name" value="TRNA (GUANINE-N(1)-)-METHYLTRANSFERASE"/>
    <property type="match status" value="1"/>
</dbReference>
<dbReference type="PANTHER" id="PTHR46417:SF1">
    <property type="entry name" value="TRNA (GUANINE-N(1)-)-METHYLTRANSFERASE"/>
    <property type="match status" value="1"/>
</dbReference>
<dbReference type="Pfam" id="PF01746">
    <property type="entry name" value="tRNA_m1G_MT"/>
    <property type="match status" value="1"/>
</dbReference>
<dbReference type="PIRSF" id="PIRSF000386">
    <property type="entry name" value="tRNA_mtase"/>
    <property type="match status" value="1"/>
</dbReference>
<dbReference type="SUPFAM" id="SSF75217">
    <property type="entry name" value="alpha/beta knot"/>
    <property type="match status" value="1"/>
</dbReference>
<feature type="chain" id="PRO_1000130210" description="tRNA (guanine-N(1)-)-methyltransferase">
    <location>
        <begin position="1"/>
        <end position="255"/>
    </location>
</feature>
<feature type="binding site" evidence="1">
    <location>
        <position position="113"/>
    </location>
    <ligand>
        <name>S-adenosyl-L-methionine</name>
        <dbReference type="ChEBI" id="CHEBI:59789"/>
    </ligand>
</feature>
<feature type="binding site" evidence="1">
    <location>
        <begin position="133"/>
        <end position="138"/>
    </location>
    <ligand>
        <name>S-adenosyl-L-methionine</name>
        <dbReference type="ChEBI" id="CHEBI:59789"/>
    </ligand>
</feature>
<keyword id="KW-0963">Cytoplasm</keyword>
<keyword id="KW-0489">Methyltransferase</keyword>
<keyword id="KW-1185">Reference proteome</keyword>
<keyword id="KW-0949">S-adenosyl-L-methionine</keyword>
<keyword id="KW-0808">Transferase</keyword>
<keyword id="KW-0819">tRNA processing</keyword>
<evidence type="ECO:0000255" key="1">
    <source>
        <dbReference type="HAMAP-Rule" id="MF_00605"/>
    </source>
</evidence>
<organism>
    <name type="scientific">Shigella boydii serotype 18 (strain CDC 3083-94 / BS512)</name>
    <dbReference type="NCBI Taxonomy" id="344609"/>
    <lineage>
        <taxon>Bacteria</taxon>
        <taxon>Pseudomonadati</taxon>
        <taxon>Pseudomonadota</taxon>
        <taxon>Gammaproteobacteria</taxon>
        <taxon>Enterobacterales</taxon>
        <taxon>Enterobacteriaceae</taxon>
        <taxon>Shigella</taxon>
    </lineage>
</organism>
<accession>B2TYM9</accession>
<comment type="function">
    <text evidence="1">Specifically methylates guanosine-37 in various tRNAs.</text>
</comment>
<comment type="catalytic activity">
    <reaction evidence="1">
        <text>guanosine(37) in tRNA + S-adenosyl-L-methionine = N(1)-methylguanosine(37) in tRNA + S-adenosyl-L-homocysteine + H(+)</text>
        <dbReference type="Rhea" id="RHEA:36899"/>
        <dbReference type="Rhea" id="RHEA-COMP:10145"/>
        <dbReference type="Rhea" id="RHEA-COMP:10147"/>
        <dbReference type="ChEBI" id="CHEBI:15378"/>
        <dbReference type="ChEBI" id="CHEBI:57856"/>
        <dbReference type="ChEBI" id="CHEBI:59789"/>
        <dbReference type="ChEBI" id="CHEBI:73542"/>
        <dbReference type="ChEBI" id="CHEBI:74269"/>
        <dbReference type="EC" id="2.1.1.228"/>
    </reaction>
</comment>
<comment type="subunit">
    <text evidence="1">Homodimer.</text>
</comment>
<comment type="subcellular location">
    <subcellularLocation>
        <location evidence="1">Cytoplasm</location>
    </subcellularLocation>
</comment>
<comment type="similarity">
    <text evidence="1">Belongs to the RNA methyltransferase TrmD family.</text>
</comment>
<sequence>MWIGIISLFPEMFRAITDYGVTGRAVKNGLLSIQSWSPRDFTHDRHRTVDDRPYGGGPGMLMMVQPLRDAIHAAKAAAGEGAKVIYLSPQGRKLDQAGVSELATNQKLILVCGRYEGIDERVIQTEIDEEWSIGDYVLSGGELPAMTLIDSVSRFIPGVLGHEASATEDSFAEGLLDCPHYTRPEVLEGMEVPPVLLSGNHAEIRRWRLKQSLGRTWLRRPELLENLALTEEQARLLAEFKTEHAQQQHKHDGMA</sequence>
<reference key="1">
    <citation type="submission" date="2008-05" db="EMBL/GenBank/DDBJ databases">
        <title>Complete sequence of Shigella boydii serotype 18 strain BS512.</title>
        <authorList>
            <person name="Rasko D.A."/>
            <person name="Rosovitz M."/>
            <person name="Maurelli A.T."/>
            <person name="Myers G."/>
            <person name="Seshadri R."/>
            <person name="Cer R."/>
            <person name="Jiang L."/>
            <person name="Ravel J."/>
            <person name="Sebastian Y."/>
        </authorList>
    </citation>
    <scope>NUCLEOTIDE SEQUENCE [LARGE SCALE GENOMIC DNA]</scope>
    <source>
        <strain>CDC 3083-94 / BS512</strain>
    </source>
</reference>